<sequence length="233" mass="25409">MRVITVKNDIEGGKIAFTLLEEKMKAGAQTLGLATGSSPITFYEEIVKSNLDFSNMVSINLDEYVGIAASNDQSYSYFMHKHLFDAKPFKENNLPNGLAKDLKEEIKRYDAVINANPIDFQILGIGRNGHIGFNEPGTPFDITTHVVDLAPSTIEANSRFFNSIDDVPKQALSMGIGSIMKSKTIVLVAYGIEKAEAIASMIKGPITEDMPASILQKHDDVVIIVDEAAASKL</sequence>
<name>NAGB_STRA1</name>
<reference key="1">
    <citation type="journal article" date="2005" name="Proc. Natl. Acad. Sci. U.S.A.">
        <title>Genome analysis of multiple pathogenic isolates of Streptococcus agalactiae: implications for the microbial 'pan-genome'.</title>
        <authorList>
            <person name="Tettelin H."/>
            <person name="Masignani V."/>
            <person name="Cieslewicz M.J."/>
            <person name="Donati C."/>
            <person name="Medini D."/>
            <person name="Ward N.L."/>
            <person name="Angiuoli S.V."/>
            <person name="Crabtree J."/>
            <person name="Jones A.L."/>
            <person name="Durkin A.S."/>
            <person name="DeBoy R.T."/>
            <person name="Davidsen T.M."/>
            <person name="Mora M."/>
            <person name="Scarselli M."/>
            <person name="Margarit y Ros I."/>
            <person name="Peterson J.D."/>
            <person name="Hauser C.R."/>
            <person name="Sundaram J.P."/>
            <person name="Nelson W.C."/>
            <person name="Madupu R."/>
            <person name="Brinkac L.M."/>
            <person name="Dodson R.J."/>
            <person name="Rosovitz M.J."/>
            <person name="Sullivan S.A."/>
            <person name="Daugherty S.C."/>
            <person name="Haft D.H."/>
            <person name="Selengut J."/>
            <person name="Gwinn M.L."/>
            <person name="Zhou L."/>
            <person name="Zafar N."/>
            <person name="Khouri H."/>
            <person name="Radune D."/>
            <person name="Dimitrov G."/>
            <person name="Watkins K."/>
            <person name="O'Connor K.J."/>
            <person name="Smith S."/>
            <person name="Utterback T.R."/>
            <person name="White O."/>
            <person name="Rubens C.E."/>
            <person name="Grandi G."/>
            <person name="Madoff L.C."/>
            <person name="Kasper D.L."/>
            <person name="Telford J.L."/>
            <person name="Wessels M.R."/>
            <person name="Rappuoli R."/>
            <person name="Fraser C.M."/>
        </authorList>
    </citation>
    <scope>NUCLEOTIDE SEQUENCE [LARGE SCALE GENOMIC DNA]</scope>
    <source>
        <strain>ATCC 27591 / A909 / CDC SS700</strain>
    </source>
</reference>
<feature type="chain" id="PRO_1000067026" description="Glucosamine-6-phosphate deaminase">
    <location>
        <begin position="1"/>
        <end position="233"/>
    </location>
</feature>
<feature type="active site" description="Proton acceptor; for enolization step" evidence="1">
    <location>
        <position position="62"/>
    </location>
</feature>
<feature type="active site" description="For ring-opening step" evidence="1">
    <location>
        <position position="128"/>
    </location>
</feature>
<feature type="active site" description="Proton acceptor; for ring-opening step" evidence="1">
    <location>
        <position position="130"/>
    </location>
</feature>
<feature type="active site" description="For ring-opening step" evidence="1">
    <location>
        <position position="135"/>
    </location>
</feature>
<dbReference type="EC" id="3.5.99.6" evidence="1"/>
<dbReference type="EMBL" id="CP000114">
    <property type="protein sequence ID" value="ABA45322.1"/>
    <property type="molecule type" value="Genomic_DNA"/>
</dbReference>
<dbReference type="RefSeq" id="WP_001263956.1">
    <property type="nucleotide sequence ID" value="NC_007432.1"/>
</dbReference>
<dbReference type="SMR" id="Q3K1Q7"/>
<dbReference type="KEGG" id="sak:SAK_0924"/>
<dbReference type="HOGENOM" id="CLU_049611_1_0_9"/>
<dbReference type="UniPathway" id="UPA00629">
    <property type="reaction ID" value="UER00684"/>
</dbReference>
<dbReference type="GO" id="GO:0005737">
    <property type="term" value="C:cytoplasm"/>
    <property type="evidence" value="ECO:0007669"/>
    <property type="project" value="TreeGrafter"/>
</dbReference>
<dbReference type="GO" id="GO:0004342">
    <property type="term" value="F:glucosamine-6-phosphate deaminase activity"/>
    <property type="evidence" value="ECO:0007669"/>
    <property type="project" value="UniProtKB-UniRule"/>
</dbReference>
<dbReference type="GO" id="GO:0042802">
    <property type="term" value="F:identical protein binding"/>
    <property type="evidence" value="ECO:0007669"/>
    <property type="project" value="TreeGrafter"/>
</dbReference>
<dbReference type="GO" id="GO:0005975">
    <property type="term" value="P:carbohydrate metabolic process"/>
    <property type="evidence" value="ECO:0007669"/>
    <property type="project" value="InterPro"/>
</dbReference>
<dbReference type="GO" id="GO:0006043">
    <property type="term" value="P:glucosamine catabolic process"/>
    <property type="evidence" value="ECO:0007669"/>
    <property type="project" value="TreeGrafter"/>
</dbReference>
<dbReference type="GO" id="GO:0006046">
    <property type="term" value="P:N-acetylglucosamine catabolic process"/>
    <property type="evidence" value="ECO:0007669"/>
    <property type="project" value="TreeGrafter"/>
</dbReference>
<dbReference type="GO" id="GO:0019262">
    <property type="term" value="P:N-acetylneuraminate catabolic process"/>
    <property type="evidence" value="ECO:0007669"/>
    <property type="project" value="UniProtKB-UniRule"/>
</dbReference>
<dbReference type="CDD" id="cd01399">
    <property type="entry name" value="GlcN6P_deaminase"/>
    <property type="match status" value="1"/>
</dbReference>
<dbReference type="FunFam" id="3.40.50.1360:FF:000003">
    <property type="entry name" value="Glucosamine-6-phosphate deaminase"/>
    <property type="match status" value="1"/>
</dbReference>
<dbReference type="Gene3D" id="3.40.50.1360">
    <property type="match status" value="1"/>
</dbReference>
<dbReference type="HAMAP" id="MF_01241">
    <property type="entry name" value="GlcN6P_deamin"/>
    <property type="match status" value="1"/>
</dbReference>
<dbReference type="InterPro" id="IPR006148">
    <property type="entry name" value="Glc/Gal-6P_isomerase"/>
</dbReference>
<dbReference type="InterPro" id="IPR004547">
    <property type="entry name" value="Glucosamine6P_isomerase"/>
</dbReference>
<dbReference type="InterPro" id="IPR018321">
    <property type="entry name" value="Glucosamine6P_isomerase_CS"/>
</dbReference>
<dbReference type="InterPro" id="IPR037171">
    <property type="entry name" value="NagB/RpiA_transferase-like"/>
</dbReference>
<dbReference type="PANTHER" id="PTHR11280">
    <property type="entry name" value="GLUCOSAMINE-6-PHOSPHATE ISOMERASE"/>
    <property type="match status" value="1"/>
</dbReference>
<dbReference type="PANTHER" id="PTHR11280:SF5">
    <property type="entry name" value="GLUCOSAMINE-6-PHOSPHATE ISOMERASE"/>
    <property type="match status" value="1"/>
</dbReference>
<dbReference type="Pfam" id="PF01182">
    <property type="entry name" value="Glucosamine_iso"/>
    <property type="match status" value="1"/>
</dbReference>
<dbReference type="SUPFAM" id="SSF100950">
    <property type="entry name" value="NagB/RpiA/CoA transferase-like"/>
    <property type="match status" value="1"/>
</dbReference>
<dbReference type="PROSITE" id="PS01161">
    <property type="entry name" value="GLC_GALNAC_ISOMERASE"/>
    <property type="match status" value="1"/>
</dbReference>
<proteinExistence type="inferred from homology"/>
<protein>
    <recommendedName>
        <fullName evidence="1">Glucosamine-6-phosphate deaminase</fullName>
        <ecNumber evidence="1">3.5.99.6</ecNumber>
    </recommendedName>
    <alternativeName>
        <fullName evidence="1">GlcN6P deaminase</fullName>
        <shortName evidence="1">GNPDA</shortName>
    </alternativeName>
    <alternativeName>
        <fullName evidence="1">Glucosamine-6-phosphate isomerase</fullName>
    </alternativeName>
</protein>
<accession>Q3K1Q7</accession>
<gene>
    <name evidence="1" type="primary">nagB</name>
    <name type="ordered locus">SAK_0924</name>
</gene>
<keyword id="KW-0119">Carbohydrate metabolism</keyword>
<keyword id="KW-0378">Hydrolase</keyword>
<organism>
    <name type="scientific">Streptococcus agalactiae serotype Ia (strain ATCC 27591 / A909 / CDC SS700)</name>
    <dbReference type="NCBI Taxonomy" id="205921"/>
    <lineage>
        <taxon>Bacteria</taxon>
        <taxon>Bacillati</taxon>
        <taxon>Bacillota</taxon>
        <taxon>Bacilli</taxon>
        <taxon>Lactobacillales</taxon>
        <taxon>Streptococcaceae</taxon>
        <taxon>Streptococcus</taxon>
    </lineage>
</organism>
<evidence type="ECO:0000255" key="1">
    <source>
        <dbReference type="HAMAP-Rule" id="MF_01241"/>
    </source>
</evidence>
<comment type="function">
    <text evidence="1">Catalyzes the reversible isomerization-deamination of glucosamine 6-phosphate (GlcN6P) to form fructose 6-phosphate (Fru6P) and ammonium ion.</text>
</comment>
<comment type="catalytic activity">
    <reaction evidence="1">
        <text>alpha-D-glucosamine 6-phosphate + H2O = beta-D-fructose 6-phosphate + NH4(+)</text>
        <dbReference type="Rhea" id="RHEA:12172"/>
        <dbReference type="ChEBI" id="CHEBI:15377"/>
        <dbReference type="ChEBI" id="CHEBI:28938"/>
        <dbReference type="ChEBI" id="CHEBI:57634"/>
        <dbReference type="ChEBI" id="CHEBI:75989"/>
        <dbReference type="EC" id="3.5.99.6"/>
    </reaction>
</comment>
<comment type="pathway">
    <text evidence="1">Amino-sugar metabolism; N-acetylneuraminate degradation; D-fructose 6-phosphate from N-acetylneuraminate: step 5/5.</text>
</comment>
<comment type="similarity">
    <text evidence="1">Belongs to the glucosamine/galactosamine-6-phosphate isomerase family. NagB subfamily.</text>
</comment>